<dbReference type="EC" id="4.6.1.12" evidence="1"/>
<dbReference type="EMBL" id="AP008971">
    <property type="protein sequence ID" value="BAG08647.1"/>
    <property type="molecule type" value="Genomic_DNA"/>
</dbReference>
<dbReference type="RefSeq" id="WP_012290909.1">
    <property type="nucleotide sequence ID" value="NC_010376.1"/>
</dbReference>
<dbReference type="SMR" id="B0S2Q7"/>
<dbReference type="STRING" id="334413.FMG_1229"/>
<dbReference type="KEGG" id="fma:FMG_1229"/>
<dbReference type="eggNOG" id="COG0245">
    <property type="taxonomic scope" value="Bacteria"/>
</dbReference>
<dbReference type="HOGENOM" id="CLU_084630_2_0_9"/>
<dbReference type="UniPathway" id="UPA00056">
    <property type="reaction ID" value="UER00095"/>
</dbReference>
<dbReference type="Proteomes" id="UP000001319">
    <property type="component" value="Chromosome"/>
</dbReference>
<dbReference type="GO" id="GO:0008685">
    <property type="term" value="F:2-C-methyl-D-erythritol 2,4-cyclodiphosphate synthase activity"/>
    <property type="evidence" value="ECO:0007669"/>
    <property type="project" value="UniProtKB-UniRule"/>
</dbReference>
<dbReference type="GO" id="GO:0046872">
    <property type="term" value="F:metal ion binding"/>
    <property type="evidence" value="ECO:0007669"/>
    <property type="project" value="UniProtKB-KW"/>
</dbReference>
<dbReference type="GO" id="GO:0019288">
    <property type="term" value="P:isopentenyl diphosphate biosynthetic process, methylerythritol 4-phosphate pathway"/>
    <property type="evidence" value="ECO:0007669"/>
    <property type="project" value="UniProtKB-UniRule"/>
</dbReference>
<dbReference type="GO" id="GO:0016114">
    <property type="term" value="P:terpenoid biosynthetic process"/>
    <property type="evidence" value="ECO:0007669"/>
    <property type="project" value="InterPro"/>
</dbReference>
<dbReference type="CDD" id="cd00554">
    <property type="entry name" value="MECDP_synthase"/>
    <property type="match status" value="1"/>
</dbReference>
<dbReference type="FunFam" id="3.30.1330.50:FF:000001">
    <property type="entry name" value="2-C-methyl-D-erythritol 2,4-cyclodiphosphate synthase"/>
    <property type="match status" value="1"/>
</dbReference>
<dbReference type="Gene3D" id="3.30.1330.50">
    <property type="entry name" value="2-C-methyl-D-erythritol 2,4-cyclodiphosphate synthase"/>
    <property type="match status" value="1"/>
</dbReference>
<dbReference type="HAMAP" id="MF_00107">
    <property type="entry name" value="IspF"/>
    <property type="match status" value="1"/>
</dbReference>
<dbReference type="InterPro" id="IPR003526">
    <property type="entry name" value="MECDP_synthase"/>
</dbReference>
<dbReference type="InterPro" id="IPR020555">
    <property type="entry name" value="MECDP_synthase_CS"/>
</dbReference>
<dbReference type="InterPro" id="IPR036571">
    <property type="entry name" value="MECDP_synthase_sf"/>
</dbReference>
<dbReference type="NCBIfam" id="TIGR00151">
    <property type="entry name" value="ispF"/>
    <property type="match status" value="1"/>
</dbReference>
<dbReference type="PANTHER" id="PTHR43181">
    <property type="entry name" value="2-C-METHYL-D-ERYTHRITOL 2,4-CYCLODIPHOSPHATE SYNTHASE, CHLOROPLASTIC"/>
    <property type="match status" value="1"/>
</dbReference>
<dbReference type="PANTHER" id="PTHR43181:SF1">
    <property type="entry name" value="2-C-METHYL-D-ERYTHRITOL 2,4-CYCLODIPHOSPHATE SYNTHASE, CHLOROPLASTIC"/>
    <property type="match status" value="1"/>
</dbReference>
<dbReference type="Pfam" id="PF02542">
    <property type="entry name" value="YgbB"/>
    <property type="match status" value="1"/>
</dbReference>
<dbReference type="SUPFAM" id="SSF69765">
    <property type="entry name" value="IpsF-like"/>
    <property type="match status" value="1"/>
</dbReference>
<dbReference type="PROSITE" id="PS01350">
    <property type="entry name" value="ISPF"/>
    <property type="match status" value="1"/>
</dbReference>
<organism>
    <name type="scientific">Finegoldia magna (strain ATCC 29328 / DSM 20472 / WAL 2508)</name>
    <name type="common">Peptostreptococcus magnus</name>
    <dbReference type="NCBI Taxonomy" id="334413"/>
    <lineage>
        <taxon>Bacteria</taxon>
        <taxon>Bacillati</taxon>
        <taxon>Bacillota</taxon>
        <taxon>Tissierellia</taxon>
        <taxon>Tissierellales</taxon>
        <taxon>Peptoniphilaceae</taxon>
        <taxon>Finegoldia</taxon>
    </lineage>
</organism>
<comment type="function">
    <text evidence="1">Involved in the biosynthesis of isopentenyl diphosphate (IPP) and dimethylallyl diphosphate (DMAPP), two major building blocks of isoprenoid compounds. Catalyzes the conversion of 4-diphosphocytidyl-2-C-methyl-D-erythritol 2-phosphate (CDP-ME2P) to 2-C-methyl-D-erythritol 2,4-cyclodiphosphate (ME-CPP) with a corresponding release of cytidine 5-monophosphate (CMP).</text>
</comment>
<comment type="catalytic activity">
    <reaction evidence="1">
        <text>4-CDP-2-C-methyl-D-erythritol 2-phosphate = 2-C-methyl-D-erythritol 2,4-cyclic diphosphate + CMP</text>
        <dbReference type="Rhea" id="RHEA:23864"/>
        <dbReference type="ChEBI" id="CHEBI:57919"/>
        <dbReference type="ChEBI" id="CHEBI:58483"/>
        <dbReference type="ChEBI" id="CHEBI:60377"/>
        <dbReference type="EC" id="4.6.1.12"/>
    </reaction>
</comment>
<comment type="cofactor">
    <cofactor evidence="1">
        <name>a divalent metal cation</name>
        <dbReference type="ChEBI" id="CHEBI:60240"/>
    </cofactor>
    <text evidence="1">Binds 1 divalent metal cation per subunit.</text>
</comment>
<comment type="pathway">
    <text evidence="1">Isoprenoid biosynthesis; isopentenyl diphosphate biosynthesis via DXP pathway; isopentenyl diphosphate from 1-deoxy-D-xylulose 5-phosphate: step 4/6.</text>
</comment>
<comment type="subunit">
    <text evidence="1">Homotrimer.</text>
</comment>
<comment type="similarity">
    <text evidence="1">Belongs to the IspF family.</text>
</comment>
<reference key="1">
    <citation type="journal article" date="2008" name="DNA Res.">
        <title>Complete genome sequence of Finegoldia magna, an anaerobic opportunistic pathogen.</title>
        <authorList>
            <person name="Goto T."/>
            <person name="Yamashita A."/>
            <person name="Hirakawa H."/>
            <person name="Matsutani M."/>
            <person name="Todo K."/>
            <person name="Ohshima K."/>
            <person name="Toh H."/>
            <person name="Miyamoto K."/>
            <person name="Kuhara S."/>
            <person name="Hattori M."/>
            <person name="Shimizu T."/>
            <person name="Akimoto S."/>
        </authorList>
    </citation>
    <scope>NUCLEOTIDE SEQUENCE [LARGE SCALE GENOMIC DNA]</scope>
    <source>
        <strain>ATCC 29328 / DSM 20472 / WAL 2508</strain>
    </source>
</reference>
<name>ISPF_FINM2</name>
<accession>B0S2Q7</accession>
<sequence>MRIGFGLDVHKLVENRKLILGGVEIPHDKGLLGHSDADVLIHAIMDAICGALCLGDIGKLFPDTDMKYKDIDSRVLLRKVFEIMDDMGYEIGNIDSTISCQKPKLRDYIDKMRENIAQDLHTNTFNISVKATTTEQLGFEGRCEGITANSVCILNKKDL</sequence>
<keyword id="KW-0414">Isoprene biosynthesis</keyword>
<keyword id="KW-0456">Lyase</keyword>
<keyword id="KW-0479">Metal-binding</keyword>
<keyword id="KW-1185">Reference proteome</keyword>
<evidence type="ECO:0000255" key="1">
    <source>
        <dbReference type="HAMAP-Rule" id="MF_00107"/>
    </source>
</evidence>
<feature type="chain" id="PRO_1000094263" description="2-C-methyl-D-erythritol 2,4-cyclodiphosphate synthase">
    <location>
        <begin position="1"/>
        <end position="159"/>
    </location>
</feature>
<feature type="binding site" evidence="1">
    <location>
        <begin position="8"/>
        <end position="10"/>
    </location>
    <ligand>
        <name>4-CDP-2-C-methyl-D-erythritol 2-phosphate</name>
        <dbReference type="ChEBI" id="CHEBI:57919"/>
    </ligand>
</feature>
<feature type="binding site" evidence="1">
    <location>
        <position position="8"/>
    </location>
    <ligand>
        <name>a divalent metal cation</name>
        <dbReference type="ChEBI" id="CHEBI:60240"/>
    </ligand>
</feature>
<feature type="binding site" evidence="1">
    <location>
        <position position="10"/>
    </location>
    <ligand>
        <name>a divalent metal cation</name>
        <dbReference type="ChEBI" id="CHEBI:60240"/>
    </ligand>
</feature>
<feature type="binding site" evidence="1">
    <location>
        <begin position="34"/>
        <end position="35"/>
    </location>
    <ligand>
        <name>4-CDP-2-C-methyl-D-erythritol 2-phosphate</name>
        <dbReference type="ChEBI" id="CHEBI:57919"/>
    </ligand>
</feature>
<feature type="binding site" evidence="1">
    <location>
        <position position="42"/>
    </location>
    <ligand>
        <name>a divalent metal cation</name>
        <dbReference type="ChEBI" id="CHEBI:60240"/>
    </ligand>
</feature>
<feature type="binding site" evidence="1">
    <location>
        <begin position="56"/>
        <end position="58"/>
    </location>
    <ligand>
        <name>4-CDP-2-C-methyl-D-erythritol 2-phosphate</name>
        <dbReference type="ChEBI" id="CHEBI:57919"/>
    </ligand>
</feature>
<feature type="binding site" evidence="1">
    <location>
        <begin position="61"/>
        <end position="65"/>
    </location>
    <ligand>
        <name>4-CDP-2-C-methyl-D-erythritol 2-phosphate</name>
        <dbReference type="ChEBI" id="CHEBI:57919"/>
    </ligand>
</feature>
<feature type="binding site" evidence="1">
    <location>
        <begin position="132"/>
        <end position="135"/>
    </location>
    <ligand>
        <name>4-CDP-2-C-methyl-D-erythritol 2-phosphate</name>
        <dbReference type="ChEBI" id="CHEBI:57919"/>
    </ligand>
</feature>
<feature type="binding site" evidence="1">
    <location>
        <position position="139"/>
    </location>
    <ligand>
        <name>4-CDP-2-C-methyl-D-erythritol 2-phosphate</name>
        <dbReference type="ChEBI" id="CHEBI:57919"/>
    </ligand>
</feature>
<feature type="binding site" evidence="1">
    <location>
        <position position="142"/>
    </location>
    <ligand>
        <name>4-CDP-2-C-methyl-D-erythritol 2-phosphate</name>
        <dbReference type="ChEBI" id="CHEBI:57919"/>
    </ligand>
</feature>
<feature type="site" description="Transition state stabilizer" evidence="1">
    <location>
        <position position="34"/>
    </location>
</feature>
<feature type="site" description="Transition state stabilizer" evidence="1">
    <location>
        <position position="133"/>
    </location>
</feature>
<protein>
    <recommendedName>
        <fullName evidence="1">2-C-methyl-D-erythritol 2,4-cyclodiphosphate synthase</fullName>
        <shortName evidence="1">MECDP-synthase</shortName>
        <shortName evidence="1">MECPP-synthase</shortName>
        <shortName evidence="1">MECPS</shortName>
        <ecNumber evidence="1">4.6.1.12</ecNumber>
    </recommendedName>
</protein>
<proteinExistence type="inferred from homology"/>
<gene>
    <name evidence="1" type="primary">ispF</name>
    <name type="ordered locus">FMG_1229</name>
</gene>